<accession>Q0I508</accession>
<organism>
    <name type="scientific">Histophilus somni (strain 129Pt)</name>
    <name type="common">Haemophilus somnus</name>
    <dbReference type="NCBI Taxonomy" id="205914"/>
    <lineage>
        <taxon>Bacteria</taxon>
        <taxon>Pseudomonadati</taxon>
        <taxon>Pseudomonadota</taxon>
        <taxon>Gammaproteobacteria</taxon>
        <taxon>Pasteurellales</taxon>
        <taxon>Pasteurellaceae</taxon>
        <taxon>Histophilus</taxon>
    </lineage>
</organism>
<gene>
    <name evidence="1" type="primary">torD</name>
    <name type="ordered locus">HS_1674</name>
</gene>
<sequence>MITLNTEEKIFIYSWLKNILSHELTEQQLQQYQQGVFTPLFDFLSEQDLAEQINTVRNSLMQLSNLPLAHLELAADFAQLFLLNGENSALPYASAYLSEKELNQHIAFIDHLLLKYQLKFDHSLREPSDHLAVYLELLITLEKSGQKEKSFNFIQHYLLAWLIPFNKKVQKIKTETSFYQAITEILITLLNKT</sequence>
<evidence type="ECO:0000255" key="1">
    <source>
        <dbReference type="HAMAP-Rule" id="MF_01150"/>
    </source>
</evidence>
<dbReference type="EMBL" id="CP000436">
    <property type="protein sequence ID" value="ABI25942.1"/>
    <property type="molecule type" value="Genomic_DNA"/>
</dbReference>
<dbReference type="SMR" id="Q0I508"/>
<dbReference type="KEGG" id="hso:HS_1674"/>
<dbReference type="eggNOG" id="COG3381">
    <property type="taxonomic scope" value="Bacteria"/>
</dbReference>
<dbReference type="HOGENOM" id="CLU_077650_4_0_6"/>
<dbReference type="GO" id="GO:0005737">
    <property type="term" value="C:cytoplasm"/>
    <property type="evidence" value="ECO:0007669"/>
    <property type="project" value="UniProtKB-SubCell"/>
</dbReference>
<dbReference type="GO" id="GO:0051259">
    <property type="term" value="P:protein complex oligomerization"/>
    <property type="evidence" value="ECO:0007669"/>
    <property type="project" value="InterPro"/>
</dbReference>
<dbReference type="GO" id="GO:0006457">
    <property type="term" value="P:protein folding"/>
    <property type="evidence" value="ECO:0007669"/>
    <property type="project" value="UniProtKB-UniRule"/>
</dbReference>
<dbReference type="Gene3D" id="1.20.120.1820">
    <property type="match status" value="1"/>
</dbReference>
<dbReference type="Gene3D" id="1.20.1280.20">
    <property type="entry name" value="HscB, C-terminal domain"/>
    <property type="match status" value="1"/>
</dbReference>
<dbReference type="HAMAP" id="MF_01150">
    <property type="entry name" value="TorD"/>
    <property type="match status" value="1"/>
</dbReference>
<dbReference type="InterPro" id="IPR023069">
    <property type="entry name" value="Chaperone_TorD"/>
</dbReference>
<dbReference type="InterPro" id="IPR020945">
    <property type="entry name" value="DMSO/NO3_reduct_chaperone"/>
</dbReference>
<dbReference type="InterPro" id="IPR036386">
    <property type="entry name" value="HscB_C_sf"/>
</dbReference>
<dbReference type="InterPro" id="IPR036411">
    <property type="entry name" value="TorD-like_sf"/>
</dbReference>
<dbReference type="InterPro" id="IPR050289">
    <property type="entry name" value="TorD/DmsD_chaperones"/>
</dbReference>
<dbReference type="NCBIfam" id="NF003442">
    <property type="entry name" value="PRK04976.1"/>
    <property type="match status" value="1"/>
</dbReference>
<dbReference type="PANTHER" id="PTHR34227:SF11">
    <property type="entry name" value="CHAPERONE PROTEIN TORD"/>
    <property type="match status" value="1"/>
</dbReference>
<dbReference type="PANTHER" id="PTHR34227">
    <property type="entry name" value="CHAPERONE PROTEIN YCDY"/>
    <property type="match status" value="1"/>
</dbReference>
<dbReference type="Pfam" id="PF02613">
    <property type="entry name" value="Nitrate_red_del"/>
    <property type="match status" value="1"/>
</dbReference>
<dbReference type="SUPFAM" id="SSF89155">
    <property type="entry name" value="TorD-like"/>
    <property type="match status" value="1"/>
</dbReference>
<feature type="chain" id="PRO_0000414895" description="Chaperone protein TorD">
    <location>
        <begin position="1"/>
        <end position="193"/>
    </location>
</feature>
<proteinExistence type="inferred from homology"/>
<keyword id="KW-0143">Chaperone</keyword>
<keyword id="KW-0963">Cytoplasm</keyword>
<comment type="function">
    <text evidence="1">Involved in the biogenesis of TorA. Acts on TorA before the insertion of the molybdenum cofactor and, as a result, probably favors a conformation of the apoenzyme that is competent for acquiring the cofactor.</text>
</comment>
<comment type="subcellular location">
    <subcellularLocation>
        <location evidence="1">Cytoplasm</location>
    </subcellularLocation>
</comment>
<comment type="similarity">
    <text evidence="1">Belongs to the TorD/DmsD family. TorD subfamily.</text>
</comment>
<name>TORD_HISS1</name>
<protein>
    <recommendedName>
        <fullName evidence="1">Chaperone protein TorD</fullName>
    </recommendedName>
</protein>
<reference key="1">
    <citation type="journal article" date="2007" name="J. Bacteriol.">
        <title>Complete genome sequence of Haemophilus somnus (Histophilus somni) strain 129Pt and comparison to Haemophilus ducreyi 35000HP and Haemophilus influenzae Rd.</title>
        <authorList>
            <person name="Challacombe J.F."/>
            <person name="Duncan A.J."/>
            <person name="Brettin T.S."/>
            <person name="Bruce D."/>
            <person name="Chertkov O."/>
            <person name="Detter J.C."/>
            <person name="Han C.S."/>
            <person name="Misra M."/>
            <person name="Richardson P."/>
            <person name="Tapia R."/>
            <person name="Thayer N."/>
            <person name="Xie G."/>
            <person name="Inzana T.J."/>
        </authorList>
    </citation>
    <scope>NUCLEOTIDE SEQUENCE [LARGE SCALE GENOMIC DNA]</scope>
    <source>
        <strain>129Pt</strain>
    </source>
</reference>